<organism>
    <name type="scientific">Schizosaccharomyces pombe (strain 972 / ATCC 24843)</name>
    <name type="common">Fission yeast</name>
    <dbReference type="NCBI Taxonomy" id="284812"/>
    <lineage>
        <taxon>Eukaryota</taxon>
        <taxon>Fungi</taxon>
        <taxon>Dikarya</taxon>
        <taxon>Ascomycota</taxon>
        <taxon>Taphrinomycotina</taxon>
        <taxon>Schizosaccharomycetes</taxon>
        <taxon>Schizosaccharomycetales</taxon>
        <taxon>Schizosaccharomycetaceae</taxon>
        <taxon>Schizosaccharomyces</taxon>
    </lineage>
</organism>
<accession>Q9C0W2</accession>
<accession>O13617</accession>
<gene>
    <name evidence="8" type="primary">abo2</name>
    <name type="ORF">pi026</name>
    <name evidence="8" type="ORF">SPBP22H7.05c</name>
</gene>
<name>ATD22_SCHPO</name>
<sequence length="1201" mass="137385">MRRRARSIRFSSDDNEDNEEDDDYYSNAHSEKSEDHSNHIKVSHFDPSSYKQKLVSVRETQRNRKFSSLQKHLNTETPSFSVSIENPSKPSAAFNDASLGKKSTEHQIDGIRNGSSNLQMEGNDKELDTDNNEDESTTFKDEEDDLISPKSYLTSSKTFSYPKAPTESTNGDYLDEDYVDGQSDPESSNASDSDFADSPDDLTKVRSPIPSRRGRRKRKMRGPILPVKKNLRVKKAMSPLRAERNSPDFRRKLRSRDNRPNYHLFDYYNEIASSPNPSTTKITYNPPKLPMKDFATLPIGYQSTCDSDETSELSSTSSEQTSDVEGLNAYNNLGASSDIENAPSSQLHFGHIDEKTIRSTDPFANRENLDFNSIGGLEDIILQLKEMVMLPLLYPEVFLHLHITPPRGVLFHGPPGTGKTLMARVLAANCSTKNQKISFFLRKGSDCLSKWVGEAERQLRLLFEEARRVQPSIIFFDEIDGLAPIRSSKQEQTHSSIVSTLLALMDGLDTRGQVVVIGATNRPNDLDPALRRPGRFDREFYFPLPNKQARMKILEINSLHFSPKIPESYLLHLAESTSGYGGADLKALCTEAALNAVRRTFPQIYTSSDKFLIDLNEISVSICDFVVASEKIAVSTRRSDVKPNIPITDSHKILFKKSIEVITSKIRRLLKLDVYLPTVESLQKLPAEELMRQKEINSLKTTMSFRPRLLITDIYGYGCTYLSKVLFSMLDGIHVQSLDISELLMDTTTSPRSLLTKIFSEARKNAPSIIFINNVEKWPSLFSHSFLSMFLLLLDSISPLEPVMLLGFANTNQEKLSSTVRSWFPSHRSEYHDLSFPDYSSRYSFFHYLLKRISFLPIHQKSAEAASVDILPKVLPVSKTSDLTDKVNRRQRKNDKKIKNKIQVKLSSILEMLRSRYKKFKKPIIDLNDIYIDESNERVVKGKSKDNFEYFLSGNTVTRKKDNACFKMMNFEEIERRLWSGRYCTPKEFLRDIKMIKQDAILSGDVNLKHKAKEMFAHAELNVDELIDAKLLYDCCQVSKREKAYKQLKQKKLNNAKDAHEMQESKNEETFVRNDVAQEDNFIELSSNEVRNVSNDEHKHTLFHGQSLTHNNLIAVTPPSRTGVEHKEENKKYDNVNIQKTLAKCAEEFAEHTNFNKVELLDFVYSKLSSTIWENREEHDLLKIVRDVRQTFFRSLEDMGV</sequence>
<protein>
    <recommendedName>
        <fullName evidence="8">ATPase with bromodomain protein abo2</fullName>
        <ecNumber evidence="1">3.6.1.-</ecNumber>
    </recommendedName>
    <alternativeName>
        <fullName evidence="7">ATPase family AAA domain-containing protein abo2</fullName>
        <shortName evidence="7">AAA-ATPase</shortName>
    </alternativeName>
</protein>
<proteinExistence type="inferred from homology"/>
<reference key="1">
    <citation type="journal article" date="2000" name="Yeast">
        <title>A 38 kb segment containing the cdc2 gene from the left arm of fission yeast chromosome II: sequence analysis and characterization of the genomic DNA and cDNAs encoded on the segment.</title>
        <authorList>
            <person name="Machida M."/>
            <person name="Yamazaki S."/>
            <person name="Kunihiro S."/>
            <person name="Tanaka T."/>
            <person name="Kushida N."/>
            <person name="Jinno K."/>
            <person name="Haikawa Y."/>
            <person name="Yamazaki J."/>
            <person name="Yamamoto S."/>
            <person name="Sekine M."/>
            <person name="Oguchi A."/>
            <person name="Nagai Y."/>
            <person name="Sakai M."/>
            <person name="Aoki K."/>
            <person name="Ogura K."/>
            <person name="Kudoh Y."/>
            <person name="Kikuchi H."/>
            <person name="Zhang M.Q."/>
            <person name="Yanagida M."/>
        </authorList>
    </citation>
    <scope>NUCLEOTIDE SEQUENCE [LARGE SCALE GENOMIC DNA]</scope>
    <source>
        <strain>972 / ATCC 24843</strain>
    </source>
</reference>
<reference key="2">
    <citation type="journal article" date="2002" name="Nature">
        <title>The genome sequence of Schizosaccharomyces pombe.</title>
        <authorList>
            <person name="Wood V."/>
            <person name="Gwilliam R."/>
            <person name="Rajandream M.A."/>
            <person name="Lyne M.H."/>
            <person name="Lyne R."/>
            <person name="Stewart A."/>
            <person name="Sgouros J.G."/>
            <person name="Peat N."/>
            <person name="Hayles J."/>
            <person name="Baker S.G."/>
            <person name="Basham D."/>
            <person name="Bowman S."/>
            <person name="Brooks K."/>
            <person name="Brown D."/>
            <person name="Brown S."/>
            <person name="Chillingworth T."/>
            <person name="Churcher C.M."/>
            <person name="Collins M."/>
            <person name="Connor R."/>
            <person name="Cronin A."/>
            <person name="Davis P."/>
            <person name="Feltwell T."/>
            <person name="Fraser A."/>
            <person name="Gentles S."/>
            <person name="Goble A."/>
            <person name="Hamlin N."/>
            <person name="Harris D.E."/>
            <person name="Hidalgo J."/>
            <person name="Hodgson G."/>
            <person name="Holroyd S."/>
            <person name="Hornsby T."/>
            <person name="Howarth S."/>
            <person name="Huckle E.J."/>
            <person name="Hunt S."/>
            <person name="Jagels K."/>
            <person name="James K.D."/>
            <person name="Jones L."/>
            <person name="Jones M."/>
            <person name="Leather S."/>
            <person name="McDonald S."/>
            <person name="McLean J."/>
            <person name="Mooney P."/>
            <person name="Moule S."/>
            <person name="Mungall K.L."/>
            <person name="Murphy L.D."/>
            <person name="Niblett D."/>
            <person name="Odell C."/>
            <person name="Oliver K."/>
            <person name="O'Neil S."/>
            <person name="Pearson D."/>
            <person name="Quail M.A."/>
            <person name="Rabbinowitsch E."/>
            <person name="Rutherford K.M."/>
            <person name="Rutter S."/>
            <person name="Saunders D."/>
            <person name="Seeger K."/>
            <person name="Sharp S."/>
            <person name="Skelton J."/>
            <person name="Simmonds M.N."/>
            <person name="Squares R."/>
            <person name="Squares S."/>
            <person name="Stevens K."/>
            <person name="Taylor K."/>
            <person name="Taylor R.G."/>
            <person name="Tivey A."/>
            <person name="Walsh S.V."/>
            <person name="Warren T."/>
            <person name="Whitehead S."/>
            <person name="Woodward J.R."/>
            <person name="Volckaert G."/>
            <person name="Aert R."/>
            <person name="Robben J."/>
            <person name="Grymonprez B."/>
            <person name="Weltjens I."/>
            <person name="Vanstreels E."/>
            <person name="Rieger M."/>
            <person name="Schaefer M."/>
            <person name="Mueller-Auer S."/>
            <person name="Gabel C."/>
            <person name="Fuchs M."/>
            <person name="Duesterhoeft A."/>
            <person name="Fritzc C."/>
            <person name="Holzer E."/>
            <person name="Moestl D."/>
            <person name="Hilbert H."/>
            <person name="Borzym K."/>
            <person name="Langer I."/>
            <person name="Beck A."/>
            <person name="Lehrach H."/>
            <person name="Reinhardt R."/>
            <person name="Pohl T.M."/>
            <person name="Eger P."/>
            <person name="Zimmermann W."/>
            <person name="Wedler H."/>
            <person name="Wambutt R."/>
            <person name="Purnelle B."/>
            <person name="Goffeau A."/>
            <person name="Cadieu E."/>
            <person name="Dreano S."/>
            <person name="Gloux S."/>
            <person name="Lelaure V."/>
            <person name="Mottier S."/>
            <person name="Galibert F."/>
            <person name="Aves S.J."/>
            <person name="Xiang Z."/>
            <person name="Hunt C."/>
            <person name="Moore K."/>
            <person name="Hurst S.M."/>
            <person name="Lucas M."/>
            <person name="Rochet M."/>
            <person name="Gaillardin C."/>
            <person name="Tallada V.A."/>
            <person name="Garzon A."/>
            <person name="Thode G."/>
            <person name="Daga R.R."/>
            <person name="Cruzado L."/>
            <person name="Jimenez J."/>
            <person name="Sanchez M."/>
            <person name="del Rey F."/>
            <person name="Benito J."/>
            <person name="Dominguez A."/>
            <person name="Revuelta J.L."/>
            <person name="Moreno S."/>
            <person name="Armstrong J."/>
            <person name="Forsburg S.L."/>
            <person name="Cerutti L."/>
            <person name="Lowe T."/>
            <person name="McCombie W.R."/>
            <person name="Paulsen I."/>
            <person name="Potashkin J."/>
            <person name="Shpakovski G.V."/>
            <person name="Ussery D."/>
            <person name="Barrell B.G."/>
            <person name="Nurse P."/>
        </authorList>
    </citation>
    <scope>NUCLEOTIDE SEQUENCE [LARGE SCALE GENOMIC DNA]</scope>
    <source>
        <strain>972 / ATCC 24843</strain>
    </source>
</reference>
<reference key="3">
    <citation type="journal article" date="2006" name="Nat. Biotechnol.">
        <title>ORFeome cloning and global analysis of protein localization in the fission yeast Schizosaccharomyces pombe.</title>
        <authorList>
            <person name="Matsuyama A."/>
            <person name="Arai R."/>
            <person name="Yashiroda Y."/>
            <person name="Shirai A."/>
            <person name="Kamata A."/>
            <person name="Sekido S."/>
            <person name="Kobayashi Y."/>
            <person name="Hashimoto A."/>
            <person name="Hamamoto M."/>
            <person name="Hiraoka Y."/>
            <person name="Horinouchi S."/>
            <person name="Yoshida M."/>
        </authorList>
    </citation>
    <scope>SUBCELLULAR LOCATION [LARGE SCALE ANALYSIS]</scope>
</reference>
<reference key="4">
    <citation type="journal article" date="2016" name="EMBO Rep.">
        <title>Abo1, a conserved bromodomain AAA-ATPase, maintains global nucleosome occupancy and organisation.</title>
        <authorList>
            <person name="Gal C."/>
            <person name="Murton H.E."/>
            <person name="Subramanian L."/>
            <person name="Whale A.J."/>
            <person name="Moore K.M."/>
            <person name="Paszkiewicz K."/>
            <person name="Codlin S."/>
            <person name="Baehler J."/>
            <person name="Creamer K.M."/>
            <person name="Partridge J.F."/>
            <person name="Allshire R.C."/>
            <person name="Kent N.A."/>
            <person name="Whitehall S.K."/>
        </authorList>
    </citation>
    <scope>FUNCTION</scope>
    <scope>DISRUPTION PHENOTYPE</scope>
</reference>
<evidence type="ECO:0000250" key="1">
    <source>
        <dbReference type="UniProtKB" id="O14114"/>
    </source>
</evidence>
<evidence type="ECO:0000255" key="2"/>
<evidence type="ECO:0000255" key="3">
    <source>
        <dbReference type="PROSITE-ProRule" id="PRU00035"/>
    </source>
</evidence>
<evidence type="ECO:0000256" key="4">
    <source>
        <dbReference type="SAM" id="MobiDB-lite"/>
    </source>
</evidence>
<evidence type="ECO:0000269" key="5">
    <source>
    </source>
</evidence>
<evidence type="ECO:0000269" key="6">
    <source>
    </source>
</evidence>
<evidence type="ECO:0000305" key="7"/>
<evidence type="ECO:0000312" key="8">
    <source>
        <dbReference type="PomBase" id="SPBP22H7.05c"/>
    </source>
</evidence>
<keyword id="KW-0067">ATP-binding</keyword>
<keyword id="KW-0103">Bromodomain</keyword>
<keyword id="KW-0378">Hydrolase</keyword>
<keyword id="KW-0547">Nucleotide-binding</keyword>
<keyword id="KW-0539">Nucleus</keyword>
<keyword id="KW-1185">Reference proteome</keyword>
<comment type="function">
    <text evidence="6">Probable ATPase which may play a role in nucleosome organization.</text>
</comment>
<comment type="catalytic activity">
    <reaction evidence="1">
        <text>ATP + H2O = ADP + phosphate + H(+)</text>
        <dbReference type="Rhea" id="RHEA:13065"/>
        <dbReference type="ChEBI" id="CHEBI:15377"/>
        <dbReference type="ChEBI" id="CHEBI:15378"/>
        <dbReference type="ChEBI" id="CHEBI:30616"/>
        <dbReference type="ChEBI" id="CHEBI:43474"/>
        <dbReference type="ChEBI" id="CHEBI:456216"/>
    </reaction>
    <physiologicalReaction direction="left-to-right" evidence="1">
        <dbReference type="Rhea" id="RHEA:13066"/>
    </physiologicalReaction>
</comment>
<comment type="subcellular location">
    <subcellularLocation>
        <location evidence="5">Nucleus</location>
    </subcellularLocation>
</comment>
<comment type="disruption phenotype">
    <text evidence="6">Double knockout with abo1 results in lethality.</text>
</comment>
<comment type="similarity">
    <text evidence="7">Belongs to the AAA ATPase family.</text>
</comment>
<comment type="sequence caution" evidence="7">
    <conflict type="erroneous initiation">
        <sequence resource="EMBL-CDS" id="BAA21405"/>
    </conflict>
</comment>
<feature type="chain" id="PRO_0000310283" description="ATPase with bromodomain protein abo2">
    <location>
        <begin position="1"/>
        <end position="1201"/>
    </location>
</feature>
<feature type="domain" description="Bromo" evidence="3">
    <location>
        <begin position="897"/>
        <end position="1026"/>
    </location>
</feature>
<feature type="region of interest" description="Disordered" evidence="4">
    <location>
        <begin position="1"/>
        <end position="223"/>
    </location>
</feature>
<feature type="region of interest" description="Disordered" evidence="4">
    <location>
        <begin position="305"/>
        <end position="324"/>
    </location>
</feature>
<feature type="compositionally biased region" description="Acidic residues" evidence="4">
    <location>
        <begin position="13"/>
        <end position="24"/>
    </location>
</feature>
<feature type="compositionally biased region" description="Basic and acidic residues" evidence="4">
    <location>
        <begin position="29"/>
        <end position="38"/>
    </location>
</feature>
<feature type="compositionally biased region" description="Polar residues" evidence="4">
    <location>
        <begin position="66"/>
        <end position="89"/>
    </location>
</feature>
<feature type="compositionally biased region" description="Acidic residues" evidence="4">
    <location>
        <begin position="129"/>
        <end position="146"/>
    </location>
</feature>
<feature type="compositionally biased region" description="Basic residues" evidence="4">
    <location>
        <begin position="212"/>
        <end position="221"/>
    </location>
</feature>
<feature type="compositionally biased region" description="Low complexity" evidence="4">
    <location>
        <begin position="312"/>
        <end position="323"/>
    </location>
</feature>
<feature type="binding site" evidence="2">
    <location>
        <begin position="413"/>
        <end position="420"/>
    </location>
    <ligand>
        <name>ATP</name>
        <dbReference type="ChEBI" id="CHEBI:30616"/>
    </ligand>
</feature>
<dbReference type="EC" id="3.6.1.-" evidence="1"/>
<dbReference type="EMBL" id="AB004535">
    <property type="protein sequence ID" value="BAA21405.1"/>
    <property type="status" value="ALT_INIT"/>
    <property type="molecule type" value="Genomic_DNA"/>
</dbReference>
<dbReference type="EMBL" id="CU329671">
    <property type="protein sequence ID" value="CAC37373.1"/>
    <property type="molecule type" value="Genomic_DNA"/>
</dbReference>
<dbReference type="RefSeq" id="NP_595602.1">
    <property type="nucleotide sequence ID" value="NM_001021497.2"/>
</dbReference>
<dbReference type="EMDB" id="EMD-9872"/>
<dbReference type="SMR" id="Q9C0W2"/>
<dbReference type="BioGRID" id="277800">
    <property type="interactions" value="34"/>
</dbReference>
<dbReference type="FunCoup" id="Q9C0W2">
    <property type="interactions" value="435"/>
</dbReference>
<dbReference type="STRING" id="284812.Q9C0W2"/>
<dbReference type="iPTMnet" id="Q9C0W2"/>
<dbReference type="PaxDb" id="4896-SPBP22H7.05c.1"/>
<dbReference type="EnsemblFungi" id="SPBP22H7.05c.1">
    <property type="protein sequence ID" value="SPBP22H7.05c.1:pep"/>
    <property type="gene ID" value="SPBP22H7.05c"/>
</dbReference>
<dbReference type="GeneID" id="2541287"/>
<dbReference type="KEGG" id="spo:2541287"/>
<dbReference type="PomBase" id="SPBP22H7.05c">
    <property type="gene designation" value="abo2"/>
</dbReference>
<dbReference type="VEuPathDB" id="FungiDB:SPBP22H7.05c"/>
<dbReference type="eggNOG" id="KOG0732">
    <property type="taxonomic scope" value="Eukaryota"/>
</dbReference>
<dbReference type="HOGENOM" id="CLU_000536_6_3_1"/>
<dbReference type="InParanoid" id="Q9C0W2"/>
<dbReference type="OMA" id="YECQEME"/>
<dbReference type="PhylomeDB" id="Q9C0W2"/>
<dbReference type="PRO" id="PR:Q9C0W2"/>
<dbReference type="Proteomes" id="UP000002485">
    <property type="component" value="Chromosome II"/>
</dbReference>
<dbReference type="GO" id="GO:0000785">
    <property type="term" value="C:chromatin"/>
    <property type="evidence" value="ECO:0000255"/>
    <property type="project" value="PomBase"/>
</dbReference>
<dbReference type="GO" id="GO:0005634">
    <property type="term" value="C:nucleus"/>
    <property type="evidence" value="ECO:0007005"/>
    <property type="project" value="PomBase"/>
</dbReference>
<dbReference type="GO" id="GO:0005524">
    <property type="term" value="F:ATP binding"/>
    <property type="evidence" value="ECO:0007669"/>
    <property type="project" value="UniProtKB-KW"/>
</dbReference>
<dbReference type="GO" id="GO:0016887">
    <property type="term" value="F:ATP hydrolysis activity"/>
    <property type="evidence" value="ECO:0000255"/>
    <property type="project" value="PomBase"/>
</dbReference>
<dbReference type="GO" id="GO:0140674">
    <property type="term" value="F:ATP-dependent histone chaperone activity"/>
    <property type="evidence" value="ECO:0000303"/>
    <property type="project" value="PomBase"/>
</dbReference>
<dbReference type="GO" id="GO:0003682">
    <property type="term" value="F:chromatin binding"/>
    <property type="evidence" value="ECO:0000318"/>
    <property type="project" value="GO_Central"/>
</dbReference>
<dbReference type="GO" id="GO:0042393">
    <property type="term" value="F:histone binding"/>
    <property type="evidence" value="ECO:0000318"/>
    <property type="project" value="GO_Central"/>
</dbReference>
<dbReference type="GO" id="GO:0006338">
    <property type="term" value="P:chromatin remodeling"/>
    <property type="evidence" value="ECO:0000255"/>
    <property type="project" value="PomBase"/>
</dbReference>
<dbReference type="GO" id="GO:0006334">
    <property type="term" value="P:nucleosome assembly"/>
    <property type="evidence" value="ECO:0000318"/>
    <property type="project" value="GO_Central"/>
</dbReference>
<dbReference type="GO" id="GO:0006337">
    <property type="term" value="P:nucleosome disassembly"/>
    <property type="evidence" value="ECO:0000318"/>
    <property type="project" value="GO_Central"/>
</dbReference>
<dbReference type="GO" id="GO:0045815">
    <property type="term" value="P:transcription initiation-coupled chromatin remodeling"/>
    <property type="evidence" value="ECO:0000318"/>
    <property type="project" value="GO_Central"/>
</dbReference>
<dbReference type="CDD" id="cd05491">
    <property type="entry name" value="Bromo_TBP7_like"/>
    <property type="match status" value="1"/>
</dbReference>
<dbReference type="CDD" id="cd19517">
    <property type="entry name" value="RecA-like_Yta7-like"/>
    <property type="match status" value="1"/>
</dbReference>
<dbReference type="FunFam" id="3.40.50.300:FF:000061">
    <property type="entry name" value="ATPase family, AAA domain-containing 2"/>
    <property type="match status" value="1"/>
</dbReference>
<dbReference type="Gene3D" id="1.10.8.60">
    <property type="match status" value="1"/>
</dbReference>
<dbReference type="Gene3D" id="3.40.50.300">
    <property type="entry name" value="P-loop containing nucleotide triphosphate hydrolases"/>
    <property type="match status" value="2"/>
</dbReference>
<dbReference type="InterPro" id="IPR003593">
    <property type="entry name" value="AAA+_ATPase"/>
</dbReference>
<dbReference type="InterPro" id="IPR041569">
    <property type="entry name" value="AAA_lid_3"/>
</dbReference>
<dbReference type="InterPro" id="IPR045199">
    <property type="entry name" value="ATAD2-like"/>
</dbReference>
<dbReference type="InterPro" id="IPR003959">
    <property type="entry name" value="ATPase_AAA_core"/>
</dbReference>
<dbReference type="InterPro" id="IPR003960">
    <property type="entry name" value="ATPase_AAA_CS"/>
</dbReference>
<dbReference type="InterPro" id="IPR027417">
    <property type="entry name" value="P-loop_NTPase"/>
</dbReference>
<dbReference type="PANTHER" id="PTHR23069">
    <property type="entry name" value="AAA DOMAIN-CONTAINING"/>
    <property type="match status" value="1"/>
</dbReference>
<dbReference type="PANTHER" id="PTHR23069:SF0">
    <property type="entry name" value="TAT-BINDING HOMOLOG 7"/>
    <property type="match status" value="1"/>
</dbReference>
<dbReference type="Pfam" id="PF00004">
    <property type="entry name" value="AAA"/>
    <property type="match status" value="2"/>
</dbReference>
<dbReference type="Pfam" id="PF17862">
    <property type="entry name" value="AAA_lid_3"/>
    <property type="match status" value="1"/>
</dbReference>
<dbReference type="SMART" id="SM00382">
    <property type="entry name" value="AAA"/>
    <property type="match status" value="1"/>
</dbReference>
<dbReference type="SUPFAM" id="SSF52540">
    <property type="entry name" value="P-loop containing nucleoside triphosphate hydrolases"/>
    <property type="match status" value="2"/>
</dbReference>
<dbReference type="PROSITE" id="PS00674">
    <property type="entry name" value="AAA"/>
    <property type="match status" value="1"/>
</dbReference>
<dbReference type="PROSITE" id="PS50014">
    <property type="entry name" value="BROMODOMAIN_2"/>
    <property type="match status" value="1"/>
</dbReference>